<reference key="1">
    <citation type="journal article" date="2004" name="Nucleic Acids Res.">
        <title>The genome sequence of Bacillus cereus ATCC 10987 reveals metabolic adaptations and a large plasmid related to Bacillus anthracis pXO1.</title>
        <authorList>
            <person name="Rasko D.A."/>
            <person name="Ravel J."/>
            <person name="Oekstad O.A."/>
            <person name="Helgason E."/>
            <person name="Cer R.Z."/>
            <person name="Jiang L."/>
            <person name="Shores K.A."/>
            <person name="Fouts D.E."/>
            <person name="Tourasse N.J."/>
            <person name="Angiuoli S.V."/>
            <person name="Kolonay J.F."/>
            <person name="Nelson W.C."/>
            <person name="Kolstoe A.-B."/>
            <person name="Fraser C.M."/>
            <person name="Read T.D."/>
        </authorList>
    </citation>
    <scope>NUCLEOTIDE SEQUENCE [LARGE SCALE GENOMIC DNA]</scope>
    <source>
        <strain>ATCC 10987 / NRS 248</strain>
    </source>
</reference>
<dbReference type="EC" id="7.-.-.-"/>
<dbReference type="EMBL" id="AE017194">
    <property type="protein sequence ID" value="AAS41582.1"/>
    <property type="molecule type" value="Genomic_DNA"/>
</dbReference>
<dbReference type="SMR" id="Q737I0"/>
<dbReference type="KEGG" id="bca:BCE_2668"/>
<dbReference type="HOGENOM" id="CLU_000604_86_7_9"/>
<dbReference type="Proteomes" id="UP000002527">
    <property type="component" value="Chromosome"/>
</dbReference>
<dbReference type="GO" id="GO:0043190">
    <property type="term" value="C:ATP-binding cassette (ABC) transporter complex"/>
    <property type="evidence" value="ECO:0007669"/>
    <property type="project" value="TreeGrafter"/>
</dbReference>
<dbReference type="GO" id="GO:0005524">
    <property type="term" value="F:ATP binding"/>
    <property type="evidence" value="ECO:0007669"/>
    <property type="project" value="UniProtKB-KW"/>
</dbReference>
<dbReference type="GO" id="GO:0016887">
    <property type="term" value="F:ATP hydrolysis activity"/>
    <property type="evidence" value="ECO:0007669"/>
    <property type="project" value="InterPro"/>
</dbReference>
<dbReference type="GO" id="GO:0042626">
    <property type="term" value="F:ATPase-coupled transmembrane transporter activity"/>
    <property type="evidence" value="ECO:0007669"/>
    <property type="project" value="TreeGrafter"/>
</dbReference>
<dbReference type="CDD" id="cd03225">
    <property type="entry name" value="ABC_cobalt_CbiO_domain1"/>
    <property type="match status" value="2"/>
</dbReference>
<dbReference type="FunFam" id="3.40.50.300:FF:001422">
    <property type="entry name" value="Cobalt ABC transporter ATP-binding protein"/>
    <property type="match status" value="1"/>
</dbReference>
<dbReference type="FunFam" id="3.40.50.300:FF:000224">
    <property type="entry name" value="Energy-coupling factor transporter ATP-binding protein EcfA"/>
    <property type="match status" value="1"/>
</dbReference>
<dbReference type="Gene3D" id="3.40.50.300">
    <property type="entry name" value="P-loop containing nucleotide triphosphate hydrolases"/>
    <property type="match status" value="2"/>
</dbReference>
<dbReference type="InterPro" id="IPR003593">
    <property type="entry name" value="AAA+_ATPase"/>
</dbReference>
<dbReference type="InterPro" id="IPR022216">
    <property type="entry name" value="ABC_Co_transporter"/>
</dbReference>
<dbReference type="InterPro" id="IPR003439">
    <property type="entry name" value="ABC_transporter-like_ATP-bd"/>
</dbReference>
<dbReference type="InterPro" id="IPR017871">
    <property type="entry name" value="ABC_transporter-like_CS"/>
</dbReference>
<dbReference type="InterPro" id="IPR015856">
    <property type="entry name" value="ABC_transpr_CbiO/EcfA_su"/>
</dbReference>
<dbReference type="InterPro" id="IPR050095">
    <property type="entry name" value="ECF_ABC_transporter_ATP-bd"/>
</dbReference>
<dbReference type="InterPro" id="IPR027417">
    <property type="entry name" value="P-loop_NTPase"/>
</dbReference>
<dbReference type="NCBIfam" id="NF010167">
    <property type="entry name" value="PRK13648.1"/>
    <property type="match status" value="2"/>
</dbReference>
<dbReference type="PANTHER" id="PTHR43553:SF26">
    <property type="entry name" value="ABC TRANSPORTER ATP-BINDING PROTEIN BC_2655-RELATED"/>
    <property type="match status" value="1"/>
</dbReference>
<dbReference type="PANTHER" id="PTHR43553">
    <property type="entry name" value="HEAVY METAL TRANSPORTER"/>
    <property type="match status" value="1"/>
</dbReference>
<dbReference type="Pfam" id="PF00005">
    <property type="entry name" value="ABC_tran"/>
    <property type="match status" value="2"/>
</dbReference>
<dbReference type="Pfam" id="PF12558">
    <property type="entry name" value="DUF3744"/>
    <property type="match status" value="1"/>
</dbReference>
<dbReference type="SMART" id="SM00382">
    <property type="entry name" value="AAA"/>
    <property type="match status" value="2"/>
</dbReference>
<dbReference type="SUPFAM" id="SSF52540">
    <property type="entry name" value="P-loop containing nucleoside triphosphate hydrolases"/>
    <property type="match status" value="2"/>
</dbReference>
<dbReference type="PROSITE" id="PS00211">
    <property type="entry name" value="ABC_TRANSPORTER_1"/>
    <property type="match status" value="1"/>
</dbReference>
<dbReference type="PROSITE" id="PS50893">
    <property type="entry name" value="ABC_TRANSPORTER_2"/>
    <property type="match status" value="2"/>
</dbReference>
<sequence length="566" mass="64044">MQPIISFEQFNFQYKHAAQPTVKDVTFHIYPGEKVLIAGRSGSGKSTLAHCMNGLIPFSYEGTSTGTILIDGKDPRKGSIFEQSKQVGTILQDQDAQFIGLTVEEDVAFYLENECVNEDDMKKIVSESLKKVKMHNFHKQSPHELSGGQKQTVSLAGLLTTNAHILLFDEPLANLDPVSSLHTVELIKDIHKQYNKTIVIIEHRIEEMLNLDLDKIILIDEGEIVAIGTPEKILASNILPSIGLREPMYIEGLKRLHFDSNNDVIYPLENLQRESVSGVINEWMEKQTFCKDTPTKKELLKVENLSFSYPNKQKVLDNVNFSLFKGEIVALLGHNGAGKSTLAHSLIGINKTKNDRILIDGVNINSWSIRKRGEVISYVMQNPNHMITQATVMEEISFSLKLKKFSKEEIKVRAEETLKICDLYPFRNWPIQALSYGQKKRLTIASVLTTNPKLIILDEPTAGQDYYHYKQFMTFIRKLAAKGLSFIFITHDMNLALEYADRAIVLKEGEVIANNTASIVLGHPETLKRANLKESSLFKLVKFSGIANPERFMELYFDDIRREEGV</sequence>
<proteinExistence type="inferred from homology"/>
<comment type="function">
    <text evidence="1">Probably part of an ABC transporter complex. Responsible for energy coupling to the transport system (By similarity).</text>
</comment>
<comment type="subcellular location">
    <subcellularLocation>
        <location evidence="1">Cell membrane</location>
        <topology evidence="1">Peripheral membrane protein</topology>
    </subcellularLocation>
</comment>
<comment type="similarity">
    <text evidence="3">Belongs to the ABC transporter superfamily.</text>
</comment>
<evidence type="ECO:0000250" key="1"/>
<evidence type="ECO:0000255" key="2">
    <source>
        <dbReference type="PROSITE-ProRule" id="PRU00434"/>
    </source>
</evidence>
<evidence type="ECO:0000305" key="3"/>
<name>Y2668_BACC1</name>
<accession>Q737I0</accession>
<feature type="chain" id="PRO_0000091976" description="Putative ABC transporter ATP-binding protein BCE_2668">
    <location>
        <begin position="1"/>
        <end position="566"/>
    </location>
</feature>
<feature type="domain" description="ABC transporter 1" evidence="2">
    <location>
        <begin position="5"/>
        <end position="246"/>
    </location>
</feature>
<feature type="domain" description="ABC transporter 2" evidence="2">
    <location>
        <begin position="300"/>
        <end position="533"/>
    </location>
</feature>
<feature type="binding site" evidence="2">
    <location>
        <begin position="39"/>
        <end position="46"/>
    </location>
    <ligand>
        <name>ATP</name>
        <dbReference type="ChEBI" id="CHEBI:30616"/>
        <label>1</label>
    </ligand>
</feature>
<feature type="binding site" evidence="2">
    <location>
        <begin position="333"/>
        <end position="340"/>
    </location>
    <ligand>
        <name>ATP</name>
        <dbReference type="ChEBI" id="CHEBI:30616"/>
        <label>2</label>
    </ligand>
</feature>
<keyword id="KW-0067">ATP-binding</keyword>
<keyword id="KW-1003">Cell membrane</keyword>
<keyword id="KW-0472">Membrane</keyword>
<keyword id="KW-0547">Nucleotide-binding</keyword>
<keyword id="KW-0677">Repeat</keyword>
<keyword id="KW-1278">Translocase</keyword>
<keyword id="KW-0813">Transport</keyword>
<gene>
    <name type="ordered locus">BCE_2668</name>
</gene>
<protein>
    <recommendedName>
        <fullName>Putative ABC transporter ATP-binding protein BCE_2668</fullName>
        <ecNumber>7.-.-.-</ecNumber>
    </recommendedName>
</protein>
<organism>
    <name type="scientific">Bacillus cereus (strain ATCC 10987 / NRS 248)</name>
    <dbReference type="NCBI Taxonomy" id="222523"/>
    <lineage>
        <taxon>Bacteria</taxon>
        <taxon>Bacillati</taxon>
        <taxon>Bacillota</taxon>
        <taxon>Bacilli</taxon>
        <taxon>Bacillales</taxon>
        <taxon>Bacillaceae</taxon>
        <taxon>Bacillus</taxon>
        <taxon>Bacillus cereus group</taxon>
    </lineage>
</organism>